<accession>P0C455</accession>
<accession>P12141</accession>
<accession>Q6QY61</accession>
<accession>Q6Z503</accession>
<protein>
    <recommendedName>
        <fullName evidence="2">Large ribosomal subunit protein bL33c</fullName>
    </recommendedName>
    <alternativeName>
        <fullName>50S ribosomal protein L33, chloroplastic</fullName>
    </alternativeName>
</protein>
<dbReference type="EMBL" id="AY522331">
    <property type="protein sequence ID" value="AAS46197.1"/>
    <property type="molecule type" value="Genomic_DNA"/>
</dbReference>
<dbReference type="RefSeq" id="NP_039407.1">
    <property type="nucleotide sequence ID" value="NC_001320.1"/>
</dbReference>
<dbReference type="RefSeq" id="YP_009305325.1">
    <property type="nucleotide sequence ID" value="NC_031333.1"/>
</dbReference>
<dbReference type="GeneID" id="29141393"/>
<dbReference type="GeneID" id="3131429"/>
<dbReference type="KEGG" id="osa:3131429"/>
<dbReference type="GO" id="GO:0009507">
    <property type="term" value="C:chloroplast"/>
    <property type="evidence" value="ECO:0007669"/>
    <property type="project" value="UniProtKB-SubCell"/>
</dbReference>
<dbReference type="GO" id="GO:0009536">
    <property type="term" value="C:plastid"/>
    <property type="evidence" value="ECO:0000305"/>
    <property type="project" value="Gramene"/>
</dbReference>
<dbReference type="GO" id="GO:1990904">
    <property type="term" value="C:ribonucleoprotein complex"/>
    <property type="evidence" value="ECO:0007669"/>
    <property type="project" value="UniProtKB-KW"/>
</dbReference>
<dbReference type="GO" id="GO:0005840">
    <property type="term" value="C:ribosome"/>
    <property type="evidence" value="ECO:0007669"/>
    <property type="project" value="UniProtKB-KW"/>
</dbReference>
<dbReference type="GO" id="GO:0003735">
    <property type="term" value="F:structural constituent of ribosome"/>
    <property type="evidence" value="ECO:0007669"/>
    <property type="project" value="InterPro"/>
</dbReference>
<dbReference type="GO" id="GO:0006412">
    <property type="term" value="P:translation"/>
    <property type="evidence" value="ECO:0007669"/>
    <property type="project" value="UniProtKB-UniRule"/>
</dbReference>
<dbReference type="Gene3D" id="2.20.28.120">
    <property type="entry name" value="Ribosomal protein L33"/>
    <property type="match status" value="1"/>
</dbReference>
<dbReference type="HAMAP" id="MF_00294">
    <property type="entry name" value="Ribosomal_bL33"/>
    <property type="match status" value="1"/>
</dbReference>
<dbReference type="InterPro" id="IPR001705">
    <property type="entry name" value="Ribosomal_bL33"/>
</dbReference>
<dbReference type="InterPro" id="IPR018264">
    <property type="entry name" value="Ribosomal_bL33_CS"/>
</dbReference>
<dbReference type="InterPro" id="IPR038584">
    <property type="entry name" value="Ribosomal_bL33_sf"/>
</dbReference>
<dbReference type="InterPro" id="IPR011332">
    <property type="entry name" value="Ribosomal_zn-bd"/>
</dbReference>
<dbReference type="NCBIfam" id="NF001764">
    <property type="entry name" value="PRK00504.1"/>
    <property type="match status" value="1"/>
</dbReference>
<dbReference type="NCBIfam" id="NF001860">
    <property type="entry name" value="PRK00595.1"/>
    <property type="match status" value="1"/>
</dbReference>
<dbReference type="NCBIfam" id="TIGR01023">
    <property type="entry name" value="rpmG_bact"/>
    <property type="match status" value="1"/>
</dbReference>
<dbReference type="PANTHER" id="PTHR43168">
    <property type="entry name" value="50S RIBOSOMAL PROTEIN L33, CHLOROPLASTIC"/>
    <property type="match status" value="1"/>
</dbReference>
<dbReference type="PANTHER" id="PTHR43168:SF2">
    <property type="entry name" value="LARGE RIBOSOMAL SUBUNIT PROTEIN BL33C"/>
    <property type="match status" value="1"/>
</dbReference>
<dbReference type="Pfam" id="PF00471">
    <property type="entry name" value="Ribosomal_L33"/>
    <property type="match status" value="1"/>
</dbReference>
<dbReference type="SUPFAM" id="SSF57829">
    <property type="entry name" value="Zn-binding ribosomal proteins"/>
    <property type="match status" value="1"/>
</dbReference>
<dbReference type="PROSITE" id="PS00582">
    <property type="entry name" value="RIBOSOMAL_L33"/>
    <property type="match status" value="1"/>
</dbReference>
<sequence length="66" mass="7643">MAKGKDVRIRVILQCVSCVRKGANEESAGISRYSTQKNRHNTPGQLELRKFCRYCRKHTIHAEIKK</sequence>
<comment type="subcellular location">
    <subcellularLocation>
        <location>Plastid</location>
        <location>Chloroplast</location>
    </subcellularLocation>
</comment>
<comment type="similarity">
    <text evidence="2">Belongs to the bacterial ribosomal protein bL33 family.</text>
</comment>
<gene>
    <name type="primary">rpl33</name>
    <name type="ORF">PA086</name>
</gene>
<keyword id="KW-0150">Chloroplast</keyword>
<keyword id="KW-0934">Plastid</keyword>
<keyword id="KW-0687">Ribonucleoprotein</keyword>
<keyword id="KW-0689">Ribosomal protein</keyword>
<proteinExistence type="inferred from homology"/>
<organism>
    <name type="scientific">Oryza sativa</name>
    <name type="common">Rice</name>
    <dbReference type="NCBI Taxonomy" id="4530"/>
    <lineage>
        <taxon>Eukaryota</taxon>
        <taxon>Viridiplantae</taxon>
        <taxon>Streptophyta</taxon>
        <taxon>Embryophyta</taxon>
        <taxon>Tracheophyta</taxon>
        <taxon>Spermatophyta</taxon>
        <taxon>Magnoliopsida</taxon>
        <taxon>Liliopsida</taxon>
        <taxon>Poales</taxon>
        <taxon>Poaceae</taxon>
        <taxon>BOP clade</taxon>
        <taxon>Oryzoideae</taxon>
        <taxon>Oryzeae</taxon>
        <taxon>Oryzinae</taxon>
        <taxon>Oryza</taxon>
    </lineage>
</organism>
<name>RK33_ORYSA</name>
<evidence type="ECO:0000250" key="1"/>
<evidence type="ECO:0000305" key="2"/>
<reference key="1">
    <citation type="journal article" date="2004" name="Plant Physiol.">
        <title>A comparison of rice chloroplast genomes.</title>
        <authorList>
            <person name="Tang J."/>
            <person name="Xia H."/>
            <person name="Cao M."/>
            <person name="Zhang X."/>
            <person name="Zeng W."/>
            <person name="Hu S."/>
            <person name="Tong W."/>
            <person name="Wang J."/>
            <person name="Wang J."/>
            <person name="Yu J."/>
            <person name="Yang H."/>
            <person name="Zhu L."/>
        </authorList>
    </citation>
    <scope>NUCLEOTIDE SEQUENCE [LARGE SCALE GENOMIC DNA]</scope>
    <source>
        <strain>cv. PA64s</strain>
    </source>
</reference>
<geneLocation type="chloroplast"/>
<feature type="initiator methionine" description="Removed" evidence="1">
    <location>
        <position position="1"/>
    </location>
</feature>
<feature type="chain" id="PRO_0000170293" description="Large ribosomal subunit protein bL33c">
    <location>
        <begin position="2"/>
        <end position="66"/>
    </location>
</feature>